<dbReference type="EMBL" id="M31557">
    <property type="protein sequence ID" value="AAA50458.2"/>
    <property type="molecule type" value="mRNA"/>
</dbReference>
<dbReference type="EMBL" id="M31556">
    <property type="protein sequence ID" value="AAA50457.1"/>
    <property type="molecule type" value="mRNA"/>
</dbReference>
<dbReference type="EMBL" id="X65539">
    <property type="protein sequence ID" value="CAA46506.1"/>
    <property type="molecule type" value="Genomic_DNA"/>
</dbReference>
<dbReference type="EMBL" id="M60903">
    <property type="protein sequence ID" value="AAB67325.1"/>
    <property type="molecule type" value="Genomic_DNA"/>
</dbReference>
<dbReference type="EMBL" id="M60913">
    <property type="protein sequence ID" value="AAA62712.1"/>
    <property type="molecule type" value="Genomic_DNA"/>
</dbReference>
<dbReference type="EMBL" id="M60908">
    <property type="protein sequence ID" value="AAA62711.1"/>
    <property type="molecule type" value="Genomic_DNA"/>
</dbReference>
<dbReference type="EMBL" id="AF238612">
    <property type="protein sequence ID" value="AAG14169.1"/>
    <property type="molecule type" value="Genomic_DNA"/>
</dbReference>
<dbReference type="EMBL" id="AF196320">
    <property type="protein sequence ID" value="AAF08671.2"/>
    <property type="molecule type" value="mRNA"/>
</dbReference>
<dbReference type="PIR" id="A39505">
    <property type="entry name" value="A39505"/>
</dbReference>
<dbReference type="PIR" id="B39505">
    <property type="entry name" value="B39505"/>
</dbReference>
<dbReference type="PIR" id="S23751">
    <property type="entry name" value="S23751"/>
</dbReference>
<dbReference type="RefSeq" id="NP_001015511.3">
    <property type="nucleotide sequence ID" value="NM_001015511.3"/>
</dbReference>
<dbReference type="RefSeq" id="XP_015319926.1">
    <property type="nucleotide sequence ID" value="XM_015464440.1"/>
</dbReference>
<dbReference type="RefSeq" id="XP_015327911.1">
    <property type="nucleotide sequence ID" value="XM_015472425.1"/>
</dbReference>
<dbReference type="SMR" id="P15696"/>
<dbReference type="FunCoup" id="P15696">
    <property type="interactions" value="108"/>
</dbReference>
<dbReference type="STRING" id="9913.ENSBTAP00000065059"/>
<dbReference type="GlyCosmos" id="P15696">
    <property type="glycosylation" value="1 site, No reported glycans"/>
</dbReference>
<dbReference type="GlyGen" id="P15696">
    <property type="glycosylation" value="1 site"/>
</dbReference>
<dbReference type="PaxDb" id="9913-ENSBTAP00000047689"/>
<dbReference type="GeneID" id="317698"/>
<dbReference type="KEGG" id="bta:317698"/>
<dbReference type="CTD" id="317698"/>
<dbReference type="eggNOG" id="ENOG502T289">
    <property type="taxonomic scope" value="Eukaryota"/>
</dbReference>
<dbReference type="InParanoid" id="P15696"/>
<dbReference type="OrthoDB" id="9833506at2759"/>
<dbReference type="Proteomes" id="UP000009136">
    <property type="component" value="Unplaced"/>
</dbReference>
<dbReference type="GO" id="GO:0005615">
    <property type="term" value="C:extracellular space"/>
    <property type="evidence" value="ECO:0000318"/>
    <property type="project" value="GO_Central"/>
</dbReference>
<dbReference type="GO" id="GO:0005125">
    <property type="term" value="F:cytokine activity"/>
    <property type="evidence" value="ECO:0000318"/>
    <property type="project" value="GO_Central"/>
</dbReference>
<dbReference type="GO" id="GO:0005179">
    <property type="term" value="F:hormone activity"/>
    <property type="evidence" value="ECO:0007669"/>
    <property type="project" value="UniProtKB-KW"/>
</dbReference>
<dbReference type="GO" id="GO:0005132">
    <property type="term" value="F:type I interferon receptor binding"/>
    <property type="evidence" value="ECO:0000318"/>
    <property type="project" value="GO_Central"/>
</dbReference>
<dbReference type="GO" id="GO:0002250">
    <property type="term" value="P:adaptive immune response"/>
    <property type="evidence" value="ECO:0000318"/>
    <property type="project" value="GO_Central"/>
</dbReference>
<dbReference type="GO" id="GO:0002312">
    <property type="term" value="P:B cell activation involved in immune response"/>
    <property type="evidence" value="ECO:0000318"/>
    <property type="project" value="GO_Central"/>
</dbReference>
<dbReference type="GO" id="GO:0051607">
    <property type="term" value="P:defense response to virus"/>
    <property type="evidence" value="ECO:0007669"/>
    <property type="project" value="UniProtKB-KW"/>
</dbReference>
<dbReference type="GO" id="GO:0007565">
    <property type="term" value="P:female pregnancy"/>
    <property type="evidence" value="ECO:0007669"/>
    <property type="project" value="UniProtKB-KW"/>
</dbReference>
<dbReference type="GO" id="GO:0006959">
    <property type="term" value="P:humoral immune response"/>
    <property type="evidence" value="ECO:0000318"/>
    <property type="project" value="GO_Central"/>
</dbReference>
<dbReference type="GO" id="GO:0002323">
    <property type="term" value="P:natural killer cell activation involved in immune response"/>
    <property type="evidence" value="ECO:0000318"/>
    <property type="project" value="GO_Central"/>
</dbReference>
<dbReference type="GO" id="GO:0009891">
    <property type="term" value="P:positive regulation of biosynthetic process"/>
    <property type="evidence" value="ECO:0007669"/>
    <property type="project" value="UniProtKB-ARBA"/>
</dbReference>
<dbReference type="GO" id="GO:0043330">
    <property type="term" value="P:response to exogenous dsRNA"/>
    <property type="evidence" value="ECO:0000318"/>
    <property type="project" value="GO_Central"/>
</dbReference>
<dbReference type="GO" id="GO:0002286">
    <property type="term" value="P:T cell activation involved in immune response"/>
    <property type="evidence" value="ECO:0000318"/>
    <property type="project" value="GO_Central"/>
</dbReference>
<dbReference type="GO" id="GO:0060337">
    <property type="term" value="P:type I interferon-mediated signaling pathway"/>
    <property type="evidence" value="ECO:0000318"/>
    <property type="project" value="GO_Central"/>
</dbReference>
<dbReference type="CDD" id="cd00095">
    <property type="entry name" value="IFab"/>
    <property type="match status" value="1"/>
</dbReference>
<dbReference type="FunFam" id="1.20.1250.10:FF:000001">
    <property type="entry name" value="Interferon alpha"/>
    <property type="match status" value="1"/>
</dbReference>
<dbReference type="Gene3D" id="1.20.1250.10">
    <property type="match status" value="1"/>
</dbReference>
<dbReference type="InterPro" id="IPR009079">
    <property type="entry name" value="4_helix_cytokine-like_core"/>
</dbReference>
<dbReference type="InterPro" id="IPR000471">
    <property type="entry name" value="Interferon_alpha/beta/delta"/>
</dbReference>
<dbReference type="PANTHER" id="PTHR11691:SF37">
    <property type="entry name" value="INTERFERON OMEGA-1"/>
    <property type="match status" value="1"/>
</dbReference>
<dbReference type="PANTHER" id="PTHR11691">
    <property type="entry name" value="TYPE I INTERFERON"/>
    <property type="match status" value="1"/>
</dbReference>
<dbReference type="Pfam" id="PF00143">
    <property type="entry name" value="Interferon"/>
    <property type="match status" value="1"/>
</dbReference>
<dbReference type="PRINTS" id="PR00266">
    <property type="entry name" value="INTERFERONAB"/>
</dbReference>
<dbReference type="SMART" id="SM00076">
    <property type="entry name" value="IFabd"/>
    <property type="match status" value="1"/>
</dbReference>
<dbReference type="SUPFAM" id="SSF47266">
    <property type="entry name" value="4-helical cytokines"/>
    <property type="match status" value="1"/>
</dbReference>
<dbReference type="PROSITE" id="PS00252">
    <property type="entry name" value="INTERFERON_A_B_D"/>
    <property type="match status" value="1"/>
</dbReference>
<name>IFNT1_BOVIN</name>
<accession>P15696</accession>
<accession>P15694</accession>
<accession>Q28126</accession>
<accession>Q28127</accession>
<accession>Q28128</accession>
<accession>Q28191</accession>
<accession>Q95NE2</accession>
<evidence type="ECO:0000250" key="1"/>
<evidence type="ECO:0000255" key="2"/>
<evidence type="ECO:0000305" key="3"/>
<gene>
    <name type="primary">IFNT1</name>
</gene>
<keyword id="KW-0051">Antiviral defense</keyword>
<keyword id="KW-0202">Cytokine</keyword>
<keyword id="KW-1015">Disulfide bond</keyword>
<keyword id="KW-0325">Glycoprotein</keyword>
<keyword id="KW-0372">Hormone</keyword>
<keyword id="KW-0635">Pregnancy</keyword>
<keyword id="KW-1185">Reference proteome</keyword>
<keyword id="KW-0964">Secreted</keyword>
<keyword id="KW-0732">Signal</keyword>
<reference key="1">
    <citation type="journal article" date="1989" name="Mol. Endocrinol.">
        <title>Molecular cloning and characterization of complementary deoxyribonucleic acids corresponding to bovine trophoblast protein-1: a comparison with ovine trophoblast protein-1 and bovine interferon-alpha II.</title>
        <authorList>
            <person name="Imakawa K."/>
            <person name="Hansen T.R."/>
            <person name="Malathy P.-V."/>
            <person name="Anthony R.V."/>
            <person name="Polites H.G."/>
            <person name="Marotti K.R."/>
            <person name="Roberts R.M."/>
        </authorList>
    </citation>
    <scope>NUCLEOTIDE SEQUENCE (IFN-TAU1A AND IFN-TAU1D)</scope>
</reference>
<reference key="2">
    <citation type="journal article" date="1990" name="J. Mol. Endocrinol.">
        <title>Structure of an interferon-alpha 2 gene expressed in the bovine conceptus early in gestation.</title>
        <authorList>
            <person name="Stewart H.J."/>
            <person name="McCann S.H."/>
            <person name="Flint A.P.F."/>
        </authorList>
    </citation>
    <scope>NUCLEOTIDE SEQUENCE (IFN-TAU1C)</scope>
    <source>
        <tissue>Trophoblast</tissue>
    </source>
</reference>
<reference key="3">
    <citation type="journal article" date="1991" name="J. Biol. Chem.">
        <title>The genes for the trophoblast interferons and the related interferon-alpha II possess distinct 5'-promoter and 3'-flanking sequences.</title>
        <authorList>
            <person name="Hansen T.R."/>
            <person name="Leaman D.W."/>
            <person name="Cross J.C."/>
            <person name="Mathialagan N."/>
            <person name="Bixby J.A."/>
            <person name="Roberts R.M."/>
        </authorList>
    </citation>
    <scope>NUCLEOTIDE SEQUENCE [GENOMIC DNA] (IFN-TAU1A; IFN-TAU1B AND IFN-TAU1D)</scope>
</reference>
<reference key="4">
    <citation type="submission" date="1992-04" db="EMBL/GenBank/DDBJ databases">
        <authorList>
            <person name="Stewart H.J."/>
        </authorList>
    </citation>
    <scope>NUCLEOTIDE SEQUENCE (IFN-TAU1C)</scope>
    <source>
        <tissue>Trophoblast</tissue>
    </source>
</reference>
<reference key="5">
    <citation type="submission" date="1999-08" db="EMBL/GenBank/DDBJ databases">
        <authorList>
            <person name="Roberts R.M."/>
        </authorList>
    </citation>
    <scope>NUCLEOTIDE SEQUENCE (INF-TAU1A)</scope>
</reference>
<reference key="6">
    <citation type="submission" date="2000-02" db="EMBL/GenBank/DDBJ databases">
        <title>Cloning bovine interferon-tau genes and characterizing their transcriptional expression during early pregnancy.</title>
        <authorList>
            <person name="Chung Y.G."/>
            <person name="Seidel G.E. Jr."/>
        </authorList>
    </citation>
    <scope>NUCLEOTIDE SEQUENCE (INF-TAU1C)</scope>
</reference>
<reference key="7">
    <citation type="submission" date="1999-10" db="EMBL/GenBank/DDBJ databases">
        <title>The expressed genes for bovine interferon-tau: identification and expression during conceptus development.</title>
        <authorList>
            <person name="Larson S.F."/>
            <person name="Liu L."/>
            <person name="Winkelman G.L."/>
            <person name="Kubisch H.M."/>
            <person name="Bixby J.A."/>
            <person name="Roberts R.M."/>
            <person name="Ealy A.D."/>
        </authorList>
    </citation>
    <scope>NUCLEOTIDE SEQUENCE OF 24-195 (IFN-TAU1C)</scope>
</reference>
<reference key="8">
    <citation type="journal article" date="1995" name="J. Interferon Cytokine Res.">
        <title>A three-dimensional model of interferon-tau.</title>
        <authorList>
            <person name="Senda T."/>
            <person name="Saitoh S."/>
            <person name="Mitsui Y."/>
            <person name="Li J."/>
            <person name="Roberts R.M."/>
        </authorList>
    </citation>
    <scope>3D-STRUCTURE MODELING</scope>
</reference>
<reference key="9">
    <citation type="journal article" date="1998" name="Biochimie">
        <title>IFN-tau: a novel subtype I IFN1. Structural characteristics, non-ubiquitous expression, structure-function relationships, a pregnancy hormonal embryonic signal and cross-species therapeutic potentialities.</title>
        <authorList>
            <person name="Martal J.L."/>
            <person name="Chene N.M."/>
            <person name="Huynh L.P."/>
            <person name="L'Haridon R.M."/>
            <person name="Reinaud P.B."/>
            <person name="Guillomot M.W."/>
            <person name="Charlier M.A."/>
            <person name="Charpigny S.Y."/>
        </authorList>
    </citation>
    <scope>REVIEW</scope>
</reference>
<sequence>MAFVLSLLMALVLVSYGPGRSLGCYLSEDHMLGARENLRLLARMNRLSPHPCLQDRKDFGLPQEMVEGNQLQKDQAISVLHEMLQQCFNLFYTEHSSAAWNTTLLEQLCTGLQQQLEDLDACLGPVMGEKDSDMGRMGPILTVKKYFQGIHVYLKEKEYSDCAWEIIRVEMMRALSSSTTLQKRLRKMGGDLNSL</sequence>
<comment type="function">
    <text>Paracrine hormone primarily responsible for maternal recognition of pregnancy. Interacts with endometrial receptors, probably type I interferon receptors, and blocks estrogen receptor expression, preventing the estrogen-induced increase in oxytocin receptor expression in the endometrium. This results in the suppression of the pulsatile endometrial release of the luteolytic hormone prostaglandin F2-alpha, hindering the regression of the corpus luteum (luteolysis) and therefore a return to ovarian cyclicity. This, and a possible direct effect of IFN-tau on prostaglandin synthesis, leads in turn to continued ovarian progesterone secretion, which stimulates the secretion by the endometrium of the nutrients required for the growth of the conceptus. In summary, displays particularly high antiviral and antiproliferative potency concurrently with particular weak cytotoxicity, high antiluteolytic activity and immunomodulatory properties. In contrast with other IFNs, IFN-tau is not virally inducible.</text>
</comment>
<comment type="subcellular location">
    <subcellularLocation>
        <location>Secreted</location>
    </subcellularLocation>
    <text>Secreted into the uterine lumen.</text>
</comment>
<comment type="tissue specificity">
    <text>Constitutively and exclusively expressed in the mononuclear cells of the extraembryonic trophectoderm.</text>
</comment>
<comment type="developmental stage">
    <text>Major secretory product synthesized by the bovine conceptus between days 15 and 25 of pregnancy.</text>
</comment>
<comment type="polymorphism">
    <text>There seems to be four variants of IFN-tau 1: A, B (shown here), C and D.</text>
</comment>
<comment type="miscellaneous">
    <text>IFN-tau genes are intronless. They evolved from IFN-omega genes in the ruminantia suborder and have continued to duplicate independently in different lineages of the ruminantia. They code for proteins very similar in sequence but with different biological potency and pattern of expression.</text>
</comment>
<comment type="similarity">
    <text evidence="3">Belongs to the alpha/beta interferon family. IFN-alphaII subfamily.</text>
</comment>
<feature type="signal peptide" evidence="3">
    <location>
        <begin position="1"/>
        <end position="23"/>
    </location>
</feature>
<feature type="chain" id="PRO_0000016412" description="Interferon tau-1">
    <location>
        <begin position="24"/>
        <end position="195"/>
    </location>
</feature>
<feature type="glycosylation site" description="N-linked (GlcNAc...) asparagine" evidence="2">
    <location>
        <position position="101"/>
    </location>
</feature>
<feature type="disulfide bond" evidence="1">
    <location>
        <begin position="24"/>
        <end position="122"/>
    </location>
</feature>
<feature type="disulfide bond" evidence="1">
    <location>
        <begin position="52"/>
        <end position="162"/>
    </location>
</feature>
<feature type="sequence variant" description="In IFN-tau1D.">
    <original>D</original>
    <variation>N</variation>
    <location>
        <position position="29"/>
    </location>
</feature>
<feature type="sequence variant" description="In IFN-tau1A.">
    <original>F</original>
    <variation>L</variation>
    <location>
        <position position="88"/>
    </location>
</feature>
<feature type="sequence variant" description="In IFN-tau1C and IFN-tau1D.">
    <original>V</original>
    <variation>M</variation>
    <location>
        <position position="169"/>
    </location>
</feature>
<feature type="sequence conflict" description="In Ref. 1; AAA50458." evidence="3" ref="1">
    <original>P</original>
    <variation>Q</variation>
    <location>
        <position position="18"/>
    </location>
</feature>
<feature type="sequence conflict" description="In Ref. 1; AAA50457." evidence="3" ref="1">
    <original>R</original>
    <variation>E</variation>
    <location>
        <position position="20"/>
    </location>
</feature>
<proteinExistence type="evidence at transcript level"/>
<organism>
    <name type="scientific">Bos taurus</name>
    <name type="common">Bovine</name>
    <dbReference type="NCBI Taxonomy" id="9913"/>
    <lineage>
        <taxon>Eukaryota</taxon>
        <taxon>Metazoa</taxon>
        <taxon>Chordata</taxon>
        <taxon>Craniata</taxon>
        <taxon>Vertebrata</taxon>
        <taxon>Euteleostomi</taxon>
        <taxon>Mammalia</taxon>
        <taxon>Eutheria</taxon>
        <taxon>Laurasiatheria</taxon>
        <taxon>Artiodactyla</taxon>
        <taxon>Ruminantia</taxon>
        <taxon>Pecora</taxon>
        <taxon>Bovidae</taxon>
        <taxon>Bovinae</taxon>
        <taxon>Bos</taxon>
    </lineage>
</organism>
<protein>
    <recommendedName>
        <fullName>Interferon tau-1</fullName>
        <shortName>IFN-tau-1</shortName>
    </recommendedName>
    <alternativeName>
        <fullName>Antiluteolysin</fullName>
    </alternativeName>
    <alternativeName>
        <fullName>Trophoblast antiluteolytic protein</fullName>
    </alternativeName>
    <alternativeName>
        <fullName>Trophoblast protein 1</fullName>
        <shortName>TP-1</shortName>
    </alternativeName>
    <alternativeName>
        <fullName>Trophoblastin</fullName>
    </alternativeName>
</protein>